<proteinExistence type="inferred from homology"/>
<evidence type="ECO:0000255" key="1">
    <source>
        <dbReference type="HAMAP-Rule" id="MF_01849"/>
    </source>
</evidence>
<evidence type="ECO:0000255" key="2">
    <source>
        <dbReference type="PROSITE-ProRule" id="PRU01266"/>
    </source>
</evidence>
<protein>
    <recommendedName>
        <fullName evidence="1">Probable dual-specificity RNA methyltransferase RlmN</fullName>
        <ecNumber evidence="1">2.1.1.192</ecNumber>
    </recommendedName>
    <alternativeName>
        <fullName evidence="1">23S rRNA (adenine(2503)-C(2))-methyltransferase</fullName>
    </alternativeName>
    <alternativeName>
        <fullName evidence="1">23S rRNA m2A2503 methyltransferase</fullName>
    </alternativeName>
    <alternativeName>
        <fullName evidence="1">Ribosomal RNA large subunit methyltransferase N</fullName>
    </alternativeName>
    <alternativeName>
        <fullName evidence="1">tRNA (adenine(37)-C(2))-methyltransferase</fullName>
    </alternativeName>
    <alternativeName>
        <fullName evidence="1">tRNA m2A37 methyltransferase</fullName>
    </alternativeName>
</protein>
<feature type="chain" id="PRO_0000350260" description="Probable dual-specificity RNA methyltransferase RlmN">
    <location>
        <begin position="1"/>
        <end position="364"/>
    </location>
</feature>
<feature type="domain" description="Radical SAM core" evidence="2">
    <location>
        <begin position="112"/>
        <end position="350"/>
    </location>
</feature>
<feature type="active site" description="Proton acceptor" evidence="1">
    <location>
        <position position="106"/>
    </location>
</feature>
<feature type="active site" description="S-methylcysteine intermediate" evidence="1">
    <location>
        <position position="356"/>
    </location>
</feature>
<feature type="binding site" evidence="1">
    <location>
        <position position="126"/>
    </location>
    <ligand>
        <name>[4Fe-4S] cluster</name>
        <dbReference type="ChEBI" id="CHEBI:49883"/>
        <note>4Fe-4S-S-AdoMet</note>
    </ligand>
</feature>
<feature type="binding site" evidence="1">
    <location>
        <position position="130"/>
    </location>
    <ligand>
        <name>[4Fe-4S] cluster</name>
        <dbReference type="ChEBI" id="CHEBI:49883"/>
        <note>4Fe-4S-S-AdoMet</note>
    </ligand>
</feature>
<feature type="binding site" evidence="1">
    <location>
        <position position="133"/>
    </location>
    <ligand>
        <name>[4Fe-4S] cluster</name>
        <dbReference type="ChEBI" id="CHEBI:49883"/>
        <note>4Fe-4S-S-AdoMet</note>
    </ligand>
</feature>
<feature type="binding site" evidence="1">
    <location>
        <begin position="177"/>
        <end position="178"/>
    </location>
    <ligand>
        <name>S-adenosyl-L-methionine</name>
        <dbReference type="ChEBI" id="CHEBI:59789"/>
    </ligand>
</feature>
<feature type="binding site" evidence="1">
    <location>
        <position position="211"/>
    </location>
    <ligand>
        <name>S-adenosyl-L-methionine</name>
        <dbReference type="ChEBI" id="CHEBI:59789"/>
    </ligand>
</feature>
<feature type="binding site" evidence="1">
    <location>
        <begin position="234"/>
        <end position="236"/>
    </location>
    <ligand>
        <name>S-adenosyl-L-methionine</name>
        <dbReference type="ChEBI" id="CHEBI:59789"/>
    </ligand>
</feature>
<feature type="binding site" evidence="1">
    <location>
        <position position="313"/>
    </location>
    <ligand>
        <name>S-adenosyl-L-methionine</name>
        <dbReference type="ChEBI" id="CHEBI:59789"/>
    </ligand>
</feature>
<feature type="disulfide bond" description="(transient)" evidence="1">
    <location>
        <begin position="119"/>
        <end position="356"/>
    </location>
</feature>
<sequence>MVPELMFDEPRPGRPPRHLADLDAAGRASAVAELGLPAFRAKQLAHQYYGRLIADPRQMTDLPAAVRDRIAGAMFPNLLTASADITCDAGQTRKTLWRAVDGTMFESVLMRYPRRNTVCISSQAGCGMACPFCATGQGGLTRNLSTAEILEQVRAGAAALRDDFGDRLSNVVFMGMGEPLANYARVLAAVQRITARPPSGFGISARAVTVSTVGLAPAIRNLADARLGVTLALSLHAPDDGLRDTLVPVNNRWRISEALDAARYYANVTGRRVSIEYALIRDVNDQPWRADLLGKRLHRVLGPLAHVNLIPLNPTPGSDWDASPKPVEREFVKRVRAKGVSCTVRDTRGREISAACGQLAAVGG</sequence>
<reference key="1">
    <citation type="journal article" date="2007" name="Proc. Natl. Acad. Sci. U.S.A.">
        <title>Genome plasticity of BCG and impact on vaccine efficacy.</title>
        <authorList>
            <person name="Brosch R."/>
            <person name="Gordon S.V."/>
            <person name="Garnier T."/>
            <person name="Eiglmeier K."/>
            <person name="Frigui W."/>
            <person name="Valenti P."/>
            <person name="Dos Santos S."/>
            <person name="Duthoy S."/>
            <person name="Lacroix C."/>
            <person name="Garcia-Pelayo C."/>
            <person name="Inwald J.K."/>
            <person name="Golby P."/>
            <person name="Garcia J.N."/>
            <person name="Hewinson R.G."/>
            <person name="Behr M.A."/>
            <person name="Quail M.A."/>
            <person name="Churcher C."/>
            <person name="Barrell B.G."/>
            <person name="Parkhill J."/>
            <person name="Cole S.T."/>
        </authorList>
    </citation>
    <scope>NUCLEOTIDE SEQUENCE [LARGE SCALE GENOMIC DNA]</scope>
    <source>
        <strain>BCG / Pasteur 1173P2</strain>
    </source>
</reference>
<accession>A1KMM4</accession>
<keyword id="KW-0004">4Fe-4S</keyword>
<keyword id="KW-0963">Cytoplasm</keyword>
<keyword id="KW-1015">Disulfide bond</keyword>
<keyword id="KW-0408">Iron</keyword>
<keyword id="KW-0411">Iron-sulfur</keyword>
<keyword id="KW-0479">Metal-binding</keyword>
<keyword id="KW-0489">Methyltransferase</keyword>
<keyword id="KW-0698">rRNA processing</keyword>
<keyword id="KW-0949">S-adenosyl-L-methionine</keyword>
<keyword id="KW-0808">Transferase</keyword>
<keyword id="KW-0819">tRNA processing</keyword>
<name>RLMN_MYCBP</name>
<gene>
    <name evidence="1" type="primary">rlmN</name>
    <name type="ordered locus">BCG_2901c</name>
</gene>
<organism>
    <name type="scientific">Mycobacterium bovis (strain BCG / Pasteur 1173P2)</name>
    <dbReference type="NCBI Taxonomy" id="410289"/>
    <lineage>
        <taxon>Bacteria</taxon>
        <taxon>Bacillati</taxon>
        <taxon>Actinomycetota</taxon>
        <taxon>Actinomycetes</taxon>
        <taxon>Mycobacteriales</taxon>
        <taxon>Mycobacteriaceae</taxon>
        <taxon>Mycobacterium</taxon>
        <taxon>Mycobacterium tuberculosis complex</taxon>
    </lineage>
</organism>
<dbReference type="EC" id="2.1.1.192" evidence="1"/>
<dbReference type="EMBL" id="AM408590">
    <property type="protein sequence ID" value="CAL72890.1"/>
    <property type="molecule type" value="Genomic_DNA"/>
</dbReference>
<dbReference type="RefSeq" id="WP_003414658.1">
    <property type="nucleotide sequence ID" value="NC_008769.1"/>
</dbReference>
<dbReference type="SMR" id="A1KMM4"/>
<dbReference type="GeneID" id="45426868"/>
<dbReference type="KEGG" id="mbb:BCG_2901c"/>
<dbReference type="HOGENOM" id="CLU_029101_0_2_11"/>
<dbReference type="Proteomes" id="UP000001472">
    <property type="component" value="Chromosome"/>
</dbReference>
<dbReference type="GO" id="GO:0005737">
    <property type="term" value="C:cytoplasm"/>
    <property type="evidence" value="ECO:0007669"/>
    <property type="project" value="UniProtKB-SubCell"/>
</dbReference>
<dbReference type="GO" id="GO:0051539">
    <property type="term" value="F:4 iron, 4 sulfur cluster binding"/>
    <property type="evidence" value="ECO:0007669"/>
    <property type="project" value="UniProtKB-UniRule"/>
</dbReference>
<dbReference type="GO" id="GO:0046872">
    <property type="term" value="F:metal ion binding"/>
    <property type="evidence" value="ECO:0007669"/>
    <property type="project" value="UniProtKB-KW"/>
</dbReference>
<dbReference type="GO" id="GO:0070040">
    <property type="term" value="F:rRNA (adenine(2503)-C2-)-methyltransferase activity"/>
    <property type="evidence" value="ECO:0007669"/>
    <property type="project" value="UniProtKB-UniRule"/>
</dbReference>
<dbReference type="GO" id="GO:0019843">
    <property type="term" value="F:rRNA binding"/>
    <property type="evidence" value="ECO:0007669"/>
    <property type="project" value="UniProtKB-UniRule"/>
</dbReference>
<dbReference type="GO" id="GO:0002935">
    <property type="term" value="F:tRNA (adenine(37)-C2)-methyltransferase activity"/>
    <property type="evidence" value="ECO:0007669"/>
    <property type="project" value="UniProtKB-UniRule"/>
</dbReference>
<dbReference type="GO" id="GO:0000049">
    <property type="term" value="F:tRNA binding"/>
    <property type="evidence" value="ECO:0007669"/>
    <property type="project" value="UniProtKB-UniRule"/>
</dbReference>
<dbReference type="GO" id="GO:0070475">
    <property type="term" value="P:rRNA base methylation"/>
    <property type="evidence" value="ECO:0007669"/>
    <property type="project" value="UniProtKB-UniRule"/>
</dbReference>
<dbReference type="GO" id="GO:0030488">
    <property type="term" value="P:tRNA methylation"/>
    <property type="evidence" value="ECO:0007669"/>
    <property type="project" value="UniProtKB-UniRule"/>
</dbReference>
<dbReference type="CDD" id="cd01335">
    <property type="entry name" value="Radical_SAM"/>
    <property type="match status" value="1"/>
</dbReference>
<dbReference type="FunFam" id="1.10.150.530:FF:000004">
    <property type="entry name" value="Probable dual-specificity RNA methyltransferase RlmN"/>
    <property type="match status" value="1"/>
</dbReference>
<dbReference type="FunFam" id="3.20.20.70:FF:000014">
    <property type="entry name" value="Probable dual-specificity RNA methyltransferase RlmN"/>
    <property type="match status" value="1"/>
</dbReference>
<dbReference type="Gene3D" id="1.10.150.530">
    <property type="match status" value="1"/>
</dbReference>
<dbReference type="Gene3D" id="3.20.20.70">
    <property type="entry name" value="Aldolase class I"/>
    <property type="match status" value="1"/>
</dbReference>
<dbReference type="HAMAP" id="MF_01849">
    <property type="entry name" value="RNA_methyltr_RlmN"/>
    <property type="match status" value="1"/>
</dbReference>
<dbReference type="InterPro" id="IPR013785">
    <property type="entry name" value="Aldolase_TIM"/>
</dbReference>
<dbReference type="InterPro" id="IPR040072">
    <property type="entry name" value="Methyltransferase_A"/>
</dbReference>
<dbReference type="InterPro" id="IPR027492">
    <property type="entry name" value="RNA_MTrfase_RlmN"/>
</dbReference>
<dbReference type="InterPro" id="IPR004383">
    <property type="entry name" value="rRNA_lsu_MTrfase_RlmN/Cfr"/>
</dbReference>
<dbReference type="InterPro" id="IPR007197">
    <property type="entry name" value="rSAM"/>
</dbReference>
<dbReference type="NCBIfam" id="TIGR00048">
    <property type="entry name" value="rRNA_mod_RlmN"/>
    <property type="match status" value="1"/>
</dbReference>
<dbReference type="PANTHER" id="PTHR30544">
    <property type="entry name" value="23S RRNA METHYLTRANSFERASE"/>
    <property type="match status" value="1"/>
</dbReference>
<dbReference type="PANTHER" id="PTHR30544:SF5">
    <property type="entry name" value="RADICAL SAM CORE DOMAIN-CONTAINING PROTEIN"/>
    <property type="match status" value="1"/>
</dbReference>
<dbReference type="Pfam" id="PF04055">
    <property type="entry name" value="Radical_SAM"/>
    <property type="match status" value="1"/>
</dbReference>
<dbReference type="PIRSF" id="PIRSF006004">
    <property type="entry name" value="CHP00048"/>
    <property type="match status" value="1"/>
</dbReference>
<dbReference type="SFLD" id="SFLDF00275">
    <property type="entry name" value="adenosine_C2_methyltransferase"/>
    <property type="match status" value="1"/>
</dbReference>
<dbReference type="SFLD" id="SFLDG01062">
    <property type="entry name" value="methyltransferase_(Class_A)"/>
    <property type="match status" value="1"/>
</dbReference>
<dbReference type="SUPFAM" id="SSF102114">
    <property type="entry name" value="Radical SAM enzymes"/>
    <property type="match status" value="1"/>
</dbReference>
<dbReference type="PROSITE" id="PS51918">
    <property type="entry name" value="RADICAL_SAM"/>
    <property type="match status" value="1"/>
</dbReference>
<comment type="function">
    <text evidence="1">Specifically methylates position 2 of adenine 2503 in 23S rRNA and position 2 of adenine 37 in tRNAs.</text>
</comment>
<comment type="catalytic activity">
    <reaction evidence="1">
        <text>adenosine(2503) in 23S rRNA + 2 reduced [2Fe-2S]-[ferredoxin] + 2 S-adenosyl-L-methionine = 2-methyladenosine(2503) in 23S rRNA + 5'-deoxyadenosine + L-methionine + 2 oxidized [2Fe-2S]-[ferredoxin] + S-adenosyl-L-homocysteine</text>
        <dbReference type="Rhea" id="RHEA:42916"/>
        <dbReference type="Rhea" id="RHEA-COMP:10000"/>
        <dbReference type="Rhea" id="RHEA-COMP:10001"/>
        <dbReference type="Rhea" id="RHEA-COMP:10152"/>
        <dbReference type="Rhea" id="RHEA-COMP:10282"/>
        <dbReference type="ChEBI" id="CHEBI:17319"/>
        <dbReference type="ChEBI" id="CHEBI:33737"/>
        <dbReference type="ChEBI" id="CHEBI:33738"/>
        <dbReference type="ChEBI" id="CHEBI:57844"/>
        <dbReference type="ChEBI" id="CHEBI:57856"/>
        <dbReference type="ChEBI" id="CHEBI:59789"/>
        <dbReference type="ChEBI" id="CHEBI:74411"/>
        <dbReference type="ChEBI" id="CHEBI:74497"/>
        <dbReference type="EC" id="2.1.1.192"/>
    </reaction>
</comment>
<comment type="catalytic activity">
    <reaction evidence="1">
        <text>adenosine(37) in tRNA + 2 reduced [2Fe-2S]-[ferredoxin] + 2 S-adenosyl-L-methionine = 2-methyladenosine(37) in tRNA + 5'-deoxyadenosine + L-methionine + 2 oxidized [2Fe-2S]-[ferredoxin] + S-adenosyl-L-homocysteine</text>
        <dbReference type="Rhea" id="RHEA:43332"/>
        <dbReference type="Rhea" id="RHEA-COMP:10000"/>
        <dbReference type="Rhea" id="RHEA-COMP:10001"/>
        <dbReference type="Rhea" id="RHEA-COMP:10162"/>
        <dbReference type="Rhea" id="RHEA-COMP:10485"/>
        <dbReference type="ChEBI" id="CHEBI:17319"/>
        <dbReference type="ChEBI" id="CHEBI:33737"/>
        <dbReference type="ChEBI" id="CHEBI:33738"/>
        <dbReference type="ChEBI" id="CHEBI:57844"/>
        <dbReference type="ChEBI" id="CHEBI:57856"/>
        <dbReference type="ChEBI" id="CHEBI:59789"/>
        <dbReference type="ChEBI" id="CHEBI:74411"/>
        <dbReference type="ChEBI" id="CHEBI:74497"/>
        <dbReference type="EC" id="2.1.1.192"/>
    </reaction>
</comment>
<comment type="cofactor">
    <cofactor evidence="1">
        <name>[4Fe-4S] cluster</name>
        <dbReference type="ChEBI" id="CHEBI:49883"/>
    </cofactor>
    <text evidence="1">Binds 1 [4Fe-4S] cluster. The cluster is coordinated with 3 cysteines and an exchangeable S-adenosyl-L-methionine.</text>
</comment>
<comment type="subcellular location">
    <subcellularLocation>
        <location evidence="1">Cytoplasm</location>
    </subcellularLocation>
</comment>
<comment type="miscellaneous">
    <text evidence="1">Reaction proceeds by a ping-pong mechanism involving intermediate methylation of a conserved cysteine residue.</text>
</comment>
<comment type="similarity">
    <text evidence="1">Belongs to the radical SAM superfamily. RlmN family.</text>
</comment>